<comment type="similarity">
    <text evidence="1">Belongs to the UPF0301 (AlgH) family.</text>
</comment>
<sequence length="190" mass="20961">MTKLPYALLEKGSLLIASPDVNGGVFSRSVILVCEHSPNGSFGLILNKTLEMDSPEEVFPLDHFDESRVRFCMGGPLQANQIMLLHSSSSEDANSSIEICPSVFLGGDFSFIQEGEIKSNDEKMLFCFGYSGWQAGQLEKEFLEGLWFLAPASQEIVFTARPDKLWSDVLQNLGGRFASMSTVPENLLLN</sequence>
<reference key="1">
    <citation type="journal article" date="2000" name="Nucleic Acids Res.">
        <title>Genome sequences of Chlamydia trachomatis MoPn and Chlamydia pneumoniae AR39.</title>
        <authorList>
            <person name="Read T.D."/>
            <person name="Brunham R.C."/>
            <person name="Shen C."/>
            <person name="Gill S.R."/>
            <person name="Heidelberg J.F."/>
            <person name="White O."/>
            <person name="Hickey E.K."/>
            <person name="Peterson J.D."/>
            <person name="Utterback T.R."/>
            <person name="Berry K.J."/>
            <person name="Bass S."/>
            <person name="Linher K.D."/>
            <person name="Weidman J.F."/>
            <person name="Khouri H.M."/>
            <person name="Craven B."/>
            <person name="Bowman C."/>
            <person name="Dodson R.J."/>
            <person name="Gwinn M.L."/>
            <person name="Nelson W.C."/>
            <person name="DeBoy R.T."/>
            <person name="Kolonay J.F."/>
            <person name="McClarty G."/>
            <person name="Salzberg S.L."/>
            <person name="Eisen J.A."/>
            <person name="Fraser C.M."/>
        </authorList>
    </citation>
    <scope>NUCLEOTIDE SEQUENCE [LARGE SCALE GENOMIC DNA]</scope>
    <source>
        <strain>MoPn / Nigg</strain>
    </source>
</reference>
<name>Y483_CHLMU</name>
<gene>
    <name type="ordered locus">TC_0483</name>
</gene>
<proteinExistence type="inferred from homology"/>
<protein>
    <recommendedName>
        <fullName evidence="1">UPF0301 protein TC_0483</fullName>
    </recommendedName>
</protein>
<accession>Q9PKI2</accession>
<evidence type="ECO:0000255" key="1">
    <source>
        <dbReference type="HAMAP-Rule" id="MF_00758"/>
    </source>
</evidence>
<dbReference type="EMBL" id="AE002160">
    <property type="protein sequence ID" value="AAF39329.1"/>
    <property type="molecule type" value="Genomic_DNA"/>
</dbReference>
<dbReference type="PIR" id="C81697">
    <property type="entry name" value="C81697"/>
</dbReference>
<dbReference type="RefSeq" id="WP_010230567.1">
    <property type="nucleotide sequence ID" value="NZ_CP063055.1"/>
</dbReference>
<dbReference type="SMR" id="Q9PKI2"/>
<dbReference type="GeneID" id="1245841"/>
<dbReference type="KEGG" id="cmu:TC_0483"/>
<dbReference type="eggNOG" id="COG1678">
    <property type="taxonomic scope" value="Bacteria"/>
</dbReference>
<dbReference type="HOGENOM" id="CLU_057596_2_1_0"/>
<dbReference type="OrthoDB" id="9807486at2"/>
<dbReference type="Proteomes" id="UP000000800">
    <property type="component" value="Chromosome"/>
</dbReference>
<dbReference type="GO" id="GO:0005829">
    <property type="term" value="C:cytosol"/>
    <property type="evidence" value="ECO:0007669"/>
    <property type="project" value="TreeGrafter"/>
</dbReference>
<dbReference type="Gene3D" id="3.40.1740.10">
    <property type="entry name" value="VC0467-like"/>
    <property type="match status" value="1"/>
</dbReference>
<dbReference type="HAMAP" id="MF_00758">
    <property type="entry name" value="UPF0301"/>
    <property type="match status" value="1"/>
</dbReference>
<dbReference type="InterPro" id="IPR003774">
    <property type="entry name" value="AlgH-like"/>
</dbReference>
<dbReference type="NCBIfam" id="NF001271">
    <property type="entry name" value="PRK00228.2-3"/>
    <property type="match status" value="1"/>
</dbReference>
<dbReference type="PANTHER" id="PTHR30327">
    <property type="entry name" value="UNCHARACTERIZED PROTEIN YQGE"/>
    <property type="match status" value="1"/>
</dbReference>
<dbReference type="PANTHER" id="PTHR30327:SF1">
    <property type="entry name" value="UPF0301 PROTEIN YQGE"/>
    <property type="match status" value="1"/>
</dbReference>
<dbReference type="Pfam" id="PF02622">
    <property type="entry name" value="DUF179"/>
    <property type="match status" value="1"/>
</dbReference>
<dbReference type="SUPFAM" id="SSF143456">
    <property type="entry name" value="VC0467-like"/>
    <property type="match status" value="1"/>
</dbReference>
<organism>
    <name type="scientific">Chlamydia muridarum (strain MoPn / Nigg)</name>
    <dbReference type="NCBI Taxonomy" id="243161"/>
    <lineage>
        <taxon>Bacteria</taxon>
        <taxon>Pseudomonadati</taxon>
        <taxon>Chlamydiota</taxon>
        <taxon>Chlamydiia</taxon>
        <taxon>Chlamydiales</taxon>
        <taxon>Chlamydiaceae</taxon>
        <taxon>Chlamydia/Chlamydophila group</taxon>
        <taxon>Chlamydia</taxon>
    </lineage>
</organism>
<feature type="chain" id="PRO_0000214316" description="UPF0301 protein TC_0483">
    <location>
        <begin position="1"/>
        <end position="190"/>
    </location>
</feature>